<evidence type="ECO:0000255" key="1">
    <source>
        <dbReference type="HAMAP-Rule" id="MF_00268"/>
    </source>
</evidence>
<evidence type="ECO:0000256" key="2">
    <source>
        <dbReference type="SAM" id="MobiDB-lite"/>
    </source>
</evidence>
<organism>
    <name type="scientific">Escherichia coli O17:K52:H18 (strain UMN026 / ExPEC)</name>
    <dbReference type="NCBI Taxonomy" id="585056"/>
    <lineage>
        <taxon>Bacteria</taxon>
        <taxon>Pseudomonadati</taxon>
        <taxon>Pseudomonadota</taxon>
        <taxon>Gammaproteobacteria</taxon>
        <taxon>Enterobacterales</taxon>
        <taxon>Enterobacteriaceae</taxon>
        <taxon>Escherichia</taxon>
    </lineage>
</organism>
<name>RECA_ECOLU</name>
<protein>
    <recommendedName>
        <fullName evidence="1">Protein RecA</fullName>
    </recommendedName>
    <alternativeName>
        <fullName evidence="1">Recombinase A</fullName>
    </alternativeName>
</protein>
<reference key="1">
    <citation type="journal article" date="2009" name="PLoS Genet.">
        <title>Organised genome dynamics in the Escherichia coli species results in highly diverse adaptive paths.</title>
        <authorList>
            <person name="Touchon M."/>
            <person name="Hoede C."/>
            <person name="Tenaillon O."/>
            <person name="Barbe V."/>
            <person name="Baeriswyl S."/>
            <person name="Bidet P."/>
            <person name="Bingen E."/>
            <person name="Bonacorsi S."/>
            <person name="Bouchier C."/>
            <person name="Bouvet O."/>
            <person name="Calteau A."/>
            <person name="Chiapello H."/>
            <person name="Clermont O."/>
            <person name="Cruveiller S."/>
            <person name="Danchin A."/>
            <person name="Diard M."/>
            <person name="Dossat C."/>
            <person name="Karoui M.E."/>
            <person name="Frapy E."/>
            <person name="Garry L."/>
            <person name="Ghigo J.M."/>
            <person name="Gilles A.M."/>
            <person name="Johnson J."/>
            <person name="Le Bouguenec C."/>
            <person name="Lescat M."/>
            <person name="Mangenot S."/>
            <person name="Martinez-Jehanne V."/>
            <person name="Matic I."/>
            <person name="Nassif X."/>
            <person name="Oztas S."/>
            <person name="Petit M.A."/>
            <person name="Pichon C."/>
            <person name="Rouy Z."/>
            <person name="Ruf C.S."/>
            <person name="Schneider D."/>
            <person name="Tourret J."/>
            <person name="Vacherie B."/>
            <person name="Vallenet D."/>
            <person name="Medigue C."/>
            <person name="Rocha E.P.C."/>
            <person name="Denamur E."/>
        </authorList>
    </citation>
    <scope>NUCLEOTIDE SEQUENCE [LARGE SCALE GENOMIC DNA]</scope>
    <source>
        <strain>UMN026 / ExPEC</strain>
    </source>
</reference>
<accession>B7N6S9</accession>
<sequence>MAIDENKQKALAAALGQIEKQFGKGSIMRLGEDRSMDVETISTGSLSLDIALGAGGLPMGRIVEIYGPESSGKTTLTLQVIAAAQREGKTCAFIDAEHALDPIYARKLGVDIDNLLCSQPDTGEQALEICDALARSGAVDVIVVDSVAALTPKAEIEGEIGDSHMGLAARMMSQAMRKLAGNLKQSNTLLIFINQIRMKIGVMFGNPETTTGGNALKFYASVRLDIRRIGAVKEGENVVGSETRVKVVKNKIAAPFKQAEFQILYGEGINFYGELVDLGVKEKLIEKAGAWYSYKGEKIGQGKANATAWLKDNPETAKEIEKKVRELLLSNPNSTPDFSVDDSEGVAETNEDF</sequence>
<keyword id="KW-0067">ATP-binding</keyword>
<keyword id="KW-0963">Cytoplasm</keyword>
<keyword id="KW-0227">DNA damage</keyword>
<keyword id="KW-0233">DNA recombination</keyword>
<keyword id="KW-0234">DNA repair</keyword>
<keyword id="KW-0238">DNA-binding</keyword>
<keyword id="KW-0547">Nucleotide-binding</keyword>
<keyword id="KW-0742">SOS response</keyword>
<comment type="function">
    <text evidence="1">Can catalyze the hydrolysis of ATP in the presence of single-stranded DNA, the ATP-dependent uptake of single-stranded DNA by duplex DNA, and the ATP-dependent hybridization of homologous single-stranded DNAs. It interacts with LexA causing its activation and leading to its autocatalytic cleavage.</text>
</comment>
<comment type="subcellular location">
    <subcellularLocation>
        <location evidence="1">Cytoplasm</location>
    </subcellularLocation>
</comment>
<comment type="similarity">
    <text evidence="1">Belongs to the RecA family.</text>
</comment>
<gene>
    <name evidence="1" type="primary">recA</name>
    <name type="ordered locus">ECUMN_3020</name>
</gene>
<proteinExistence type="inferred from homology"/>
<feature type="chain" id="PRO_1000193309" description="Protein RecA">
    <location>
        <begin position="1"/>
        <end position="353"/>
    </location>
</feature>
<feature type="region of interest" description="Disordered" evidence="2">
    <location>
        <begin position="330"/>
        <end position="353"/>
    </location>
</feature>
<feature type="compositionally biased region" description="Acidic residues" evidence="2">
    <location>
        <begin position="339"/>
        <end position="353"/>
    </location>
</feature>
<feature type="binding site" evidence="1">
    <location>
        <begin position="67"/>
        <end position="74"/>
    </location>
    <ligand>
        <name>ATP</name>
        <dbReference type="ChEBI" id="CHEBI:30616"/>
    </ligand>
</feature>
<dbReference type="EMBL" id="CU928163">
    <property type="protein sequence ID" value="CAR14190.1"/>
    <property type="molecule type" value="Genomic_DNA"/>
</dbReference>
<dbReference type="RefSeq" id="WP_000963143.1">
    <property type="nucleotide sequence ID" value="NC_011751.1"/>
</dbReference>
<dbReference type="RefSeq" id="YP_002413712.1">
    <property type="nucleotide sequence ID" value="NC_011751.1"/>
</dbReference>
<dbReference type="SMR" id="B7N6S9"/>
<dbReference type="STRING" id="585056.ECUMN_3020"/>
<dbReference type="GeneID" id="93779312"/>
<dbReference type="KEGG" id="eum:ECUMN_3020"/>
<dbReference type="PATRIC" id="fig|585056.7.peg.3197"/>
<dbReference type="HOGENOM" id="CLU_040469_3_2_6"/>
<dbReference type="Proteomes" id="UP000007097">
    <property type="component" value="Chromosome"/>
</dbReference>
<dbReference type="GO" id="GO:0005829">
    <property type="term" value="C:cytosol"/>
    <property type="evidence" value="ECO:0007669"/>
    <property type="project" value="TreeGrafter"/>
</dbReference>
<dbReference type="GO" id="GO:0005524">
    <property type="term" value="F:ATP binding"/>
    <property type="evidence" value="ECO:0007669"/>
    <property type="project" value="UniProtKB-UniRule"/>
</dbReference>
<dbReference type="GO" id="GO:0016887">
    <property type="term" value="F:ATP hydrolysis activity"/>
    <property type="evidence" value="ECO:0007669"/>
    <property type="project" value="InterPro"/>
</dbReference>
<dbReference type="GO" id="GO:0140664">
    <property type="term" value="F:ATP-dependent DNA damage sensor activity"/>
    <property type="evidence" value="ECO:0007669"/>
    <property type="project" value="InterPro"/>
</dbReference>
<dbReference type="GO" id="GO:0003684">
    <property type="term" value="F:damaged DNA binding"/>
    <property type="evidence" value="ECO:0007669"/>
    <property type="project" value="UniProtKB-UniRule"/>
</dbReference>
<dbReference type="GO" id="GO:0003697">
    <property type="term" value="F:single-stranded DNA binding"/>
    <property type="evidence" value="ECO:0007669"/>
    <property type="project" value="UniProtKB-UniRule"/>
</dbReference>
<dbReference type="GO" id="GO:0006310">
    <property type="term" value="P:DNA recombination"/>
    <property type="evidence" value="ECO:0007669"/>
    <property type="project" value="UniProtKB-UniRule"/>
</dbReference>
<dbReference type="GO" id="GO:0006281">
    <property type="term" value="P:DNA repair"/>
    <property type="evidence" value="ECO:0007669"/>
    <property type="project" value="UniProtKB-UniRule"/>
</dbReference>
<dbReference type="GO" id="GO:0009432">
    <property type="term" value="P:SOS response"/>
    <property type="evidence" value="ECO:0007669"/>
    <property type="project" value="UniProtKB-UniRule"/>
</dbReference>
<dbReference type="CDD" id="cd00983">
    <property type="entry name" value="RecA"/>
    <property type="match status" value="1"/>
</dbReference>
<dbReference type="FunFam" id="3.40.50.300:FF:000087">
    <property type="entry name" value="Recombinase RecA"/>
    <property type="match status" value="1"/>
</dbReference>
<dbReference type="Gene3D" id="3.40.50.300">
    <property type="entry name" value="P-loop containing nucleotide triphosphate hydrolases"/>
    <property type="match status" value="1"/>
</dbReference>
<dbReference type="HAMAP" id="MF_00268">
    <property type="entry name" value="RecA"/>
    <property type="match status" value="1"/>
</dbReference>
<dbReference type="InterPro" id="IPR003593">
    <property type="entry name" value="AAA+_ATPase"/>
</dbReference>
<dbReference type="InterPro" id="IPR013765">
    <property type="entry name" value="DNA_recomb/repair_RecA"/>
</dbReference>
<dbReference type="InterPro" id="IPR020584">
    <property type="entry name" value="DNA_recomb/repair_RecA_CS"/>
</dbReference>
<dbReference type="InterPro" id="IPR027417">
    <property type="entry name" value="P-loop_NTPase"/>
</dbReference>
<dbReference type="InterPro" id="IPR049261">
    <property type="entry name" value="RecA-like_C"/>
</dbReference>
<dbReference type="InterPro" id="IPR049428">
    <property type="entry name" value="RecA-like_N"/>
</dbReference>
<dbReference type="InterPro" id="IPR020588">
    <property type="entry name" value="RecA_ATP-bd"/>
</dbReference>
<dbReference type="InterPro" id="IPR023400">
    <property type="entry name" value="RecA_C_sf"/>
</dbReference>
<dbReference type="InterPro" id="IPR020587">
    <property type="entry name" value="RecA_monomer-monomer_interface"/>
</dbReference>
<dbReference type="NCBIfam" id="TIGR02012">
    <property type="entry name" value="tigrfam_recA"/>
    <property type="match status" value="1"/>
</dbReference>
<dbReference type="PANTHER" id="PTHR45900:SF1">
    <property type="entry name" value="MITOCHONDRIAL DNA REPAIR PROTEIN RECA HOMOLOG-RELATED"/>
    <property type="match status" value="1"/>
</dbReference>
<dbReference type="PANTHER" id="PTHR45900">
    <property type="entry name" value="RECA"/>
    <property type="match status" value="1"/>
</dbReference>
<dbReference type="Pfam" id="PF00154">
    <property type="entry name" value="RecA"/>
    <property type="match status" value="1"/>
</dbReference>
<dbReference type="Pfam" id="PF21096">
    <property type="entry name" value="RecA_C"/>
    <property type="match status" value="1"/>
</dbReference>
<dbReference type="PRINTS" id="PR00142">
    <property type="entry name" value="RECA"/>
</dbReference>
<dbReference type="SMART" id="SM00382">
    <property type="entry name" value="AAA"/>
    <property type="match status" value="1"/>
</dbReference>
<dbReference type="SUPFAM" id="SSF52540">
    <property type="entry name" value="P-loop containing nucleoside triphosphate hydrolases"/>
    <property type="match status" value="1"/>
</dbReference>
<dbReference type="SUPFAM" id="SSF54752">
    <property type="entry name" value="RecA protein, C-terminal domain"/>
    <property type="match status" value="1"/>
</dbReference>
<dbReference type="PROSITE" id="PS00321">
    <property type="entry name" value="RECA_1"/>
    <property type="match status" value="1"/>
</dbReference>
<dbReference type="PROSITE" id="PS50162">
    <property type="entry name" value="RECA_2"/>
    <property type="match status" value="1"/>
</dbReference>
<dbReference type="PROSITE" id="PS50163">
    <property type="entry name" value="RECA_3"/>
    <property type="match status" value="1"/>
</dbReference>